<gene>
    <name evidence="5" type="primary">MURE</name>
    <name evidence="5" type="synonym">APG13</name>
    <name evidence="6" type="synonym">PDE316</name>
    <name evidence="7" type="ordered locus">At1g63680</name>
    <name evidence="8" type="ORF">F24D7.13</name>
</gene>
<protein>
    <recommendedName>
        <fullName evidence="6">UDP-N-acetylmuramoyl-L-alanyl-D-glutamate--2,6-diaminopimelate ligase MurE homolog, chloroplastic</fullName>
        <shortName evidence="5">AtMurE</shortName>
    </recommendedName>
    <alternativeName>
        <fullName evidence="5">Protein ALBINO OR PALE-GREEN 13</fullName>
    </alternativeName>
    <alternativeName>
        <fullName evidence="6">Protein PIGMENT DEFECTIVE EMBRYO 316</fullName>
    </alternativeName>
</protein>
<keyword id="KW-0150">Chloroplast</keyword>
<keyword id="KW-0597">Phosphoprotein</keyword>
<keyword id="KW-0934">Plastid</keyword>
<keyword id="KW-1185">Reference proteome</keyword>
<keyword id="KW-0804">Transcription</keyword>
<keyword id="KW-0805">Transcription regulation</keyword>
<keyword id="KW-0809">Transit peptide</keyword>
<evidence type="ECO:0000255" key="1"/>
<evidence type="ECO:0000256" key="2">
    <source>
        <dbReference type="SAM" id="MobiDB-lite"/>
    </source>
</evidence>
<evidence type="ECO:0000269" key="3">
    <source>
    </source>
</evidence>
<evidence type="ECO:0000269" key="4">
    <source>
    </source>
</evidence>
<evidence type="ECO:0000303" key="5">
    <source>
    </source>
</evidence>
<evidence type="ECO:0000305" key="6"/>
<evidence type="ECO:0000312" key="7">
    <source>
        <dbReference type="Araport" id="AT1G63680"/>
    </source>
</evidence>
<evidence type="ECO:0000312" key="8">
    <source>
        <dbReference type="EMBL" id="AAG52413.1"/>
    </source>
</evidence>
<evidence type="ECO:0007744" key="9">
    <source>
    </source>
</evidence>
<organism>
    <name type="scientific">Arabidopsis thaliana</name>
    <name type="common">Mouse-ear cress</name>
    <dbReference type="NCBI Taxonomy" id="3702"/>
    <lineage>
        <taxon>Eukaryota</taxon>
        <taxon>Viridiplantae</taxon>
        <taxon>Streptophyta</taxon>
        <taxon>Embryophyta</taxon>
        <taxon>Tracheophyta</taxon>
        <taxon>Spermatophyta</taxon>
        <taxon>Magnoliopsida</taxon>
        <taxon>eudicotyledons</taxon>
        <taxon>Gunneridae</taxon>
        <taxon>Pentapetalae</taxon>
        <taxon>rosids</taxon>
        <taxon>malvids</taxon>
        <taxon>Brassicales</taxon>
        <taxon>Brassicaceae</taxon>
        <taxon>Camelineae</taxon>
        <taxon>Arabidopsis</taxon>
    </lineage>
</organism>
<comment type="function">
    <text evidence="4">Involved in chloroplast biogenesis. Required for thylakoid membrane development. Seems to be required for plastid-encoded plastid RNA polymerase (PEP)-dependent gene expression.</text>
</comment>
<comment type="subunit">
    <text evidence="3">Component of the plastid-encoded plastid RNA polymerase (PEP) complex.</text>
</comment>
<comment type="subcellular location">
    <subcellularLocation>
        <location evidence="4">Plastid</location>
        <location evidence="4">Chloroplast</location>
    </subcellularLocation>
</comment>
<comment type="tissue specificity">
    <text evidence="4">Expressed in leaves and flowers.</text>
</comment>
<comment type="disruption phenotype">
    <text evidence="4">Albino phenotype and seedling lethality under normal growth conditions.</text>
</comment>
<comment type="similarity">
    <text evidence="6">Belongs to the MurCDEF family. MurE subfamily.</text>
</comment>
<comment type="sequence caution" evidence="6">
    <conflict type="erroneous gene model prediction">
        <sequence resource="EMBL-CDS" id="AAG52413"/>
    </conflict>
</comment>
<reference key="1">
    <citation type="journal article" date="2000" name="Nature">
        <title>Sequence and analysis of chromosome 1 of the plant Arabidopsis thaliana.</title>
        <authorList>
            <person name="Theologis A."/>
            <person name="Ecker J.R."/>
            <person name="Palm C.J."/>
            <person name="Federspiel N.A."/>
            <person name="Kaul S."/>
            <person name="White O."/>
            <person name="Alonso J."/>
            <person name="Altafi H."/>
            <person name="Araujo R."/>
            <person name="Bowman C.L."/>
            <person name="Brooks S.Y."/>
            <person name="Buehler E."/>
            <person name="Chan A."/>
            <person name="Chao Q."/>
            <person name="Chen H."/>
            <person name="Cheuk R.F."/>
            <person name="Chin C.W."/>
            <person name="Chung M.K."/>
            <person name="Conn L."/>
            <person name="Conway A.B."/>
            <person name="Conway A.R."/>
            <person name="Creasy T.H."/>
            <person name="Dewar K."/>
            <person name="Dunn P."/>
            <person name="Etgu P."/>
            <person name="Feldblyum T.V."/>
            <person name="Feng J.-D."/>
            <person name="Fong B."/>
            <person name="Fujii C.Y."/>
            <person name="Gill J.E."/>
            <person name="Goldsmith A.D."/>
            <person name="Haas B."/>
            <person name="Hansen N.F."/>
            <person name="Hughes B."/>
            <person name="Huizar L."/>
            <person name="Hunter J.L."/>
            <person name="Jenkins J."/>
            <person name="Johnson-Hopson C."/>
            <person name="Khan S."/>
            <person name="Khaykin E."/>
            <person name="Kim C.J."/>
            <person name="Koo H.L."/>
            <person name="Kremenetskaia I."/>
            <person name="Kurtz D.B."/>
            <person name="Kwan A."/>
            <person name="Lam B."/>
            <person name="Langin-Hooper S."/>
            <person name="Lee A."/>
            <person name="Lee J.M."/>
            <person name="Lenz C.A."/>
            <person name="Li J.H."/>
            <person name="Li Y.-P."/>
            <person name="Lin X."/>
            <person name="Liu S.X."/>
            <person name="Liu Z.A."/>
            <person name="Luros J.S."/>
            <person name="Maiti R."/>
            <person name="Marziali A."/>
            <person name="Militscher J."/>
            <person name="Miranda M."/>
            <person name="Nguyen M."/>
            <person name="Nierman W.C."/>
            <person name="Osborne B.I."/>
            <person name="Pai G."/>
            <person name="Peterson J."/>
            <person name="Pham P.K."/>
            <person name="Rizzo M."/>
            <person name="Rooney T."/>
            <person name="Rowley D."/>
            <person name="Sakano H."/>
            <person name="Salzberg S.L."/>
            <person name="Schwartz J.R."/>
            <person name="Shinn P."/>
            <person name="Southwick A.M."/>
            <person name="Sun H."/>
            <person name="Tallon L.J."/>
            <person name="Tambunga G."/>
            <person name="Toriumi M.J."/>
            <person name="Town C.D."/>
            <person name="Utterback T."/>
            <person name="Van Aken S."/>
            <person name="Vaysberg M."/>
            <person name="Vysotskaia V.S."/>
            <person name="Walker M."/>
            <person name="Wu D."/>
            <person name="Yu G."/>
            <person name="Fraser C.M."/>
            <person name="Venter J.C."/>
            <person name="Davis R.W."/>
        </authorList>
    </citation>
    <scope>NUCLEOTIDE SEQUENCE [LARGE SCALE GENOMIC DNA]</scope>
    <source>
        <strain>cv. Columbia</strain>
    </source>
</reference>
<reference key="2">
    <citation type="journal article" date="2017" name="Plant J.">
        <title>Araport11: a complete reannotation of the Arabidopsis thaliana reference genome.</title>
        <authorList>
            <person name="Cheng C.Y."/>
            <person name="Krishnakumar V."/>
            <person name="Chan A.P."/>
            <person name="Thibaud-Nissen F."/>
            <person name="Schobel S."/>
            <person name="Town C.D."/>
        </authorList>
    </citation>
    <scope>GENOME REANNOTATION</scope>
    <source>
        <strain>cv. Columbia</strain>
    </source>
</reference>
<reference key="3">
    <citation type="journal article" date="2006" name="Plant Cell">
        <title>pTAC2, -6, and -12 are components of the transcriptionally active plastid chromosome that are required for plastid gene expression.</title>
        <authorList>
            <person name="Pfalz J."/>
            <person name="Liere K."/>
            <person name="Kandlbinder A."/>
            <person name="Dietz K.-J."/>
            <person name="Oelmueller R."/>
        </authorList>
    </citation>
    <scope>IDENTIFICATION BY MASS SPECTROMETRY</scope>
    <scope>SUBUNIT</scope>
</reference>
<reference key="4">
    <citation type="journal article" date="2008" name="Plant J.">
        <title>An Arabidopsis homolog of the bacterial peptidoglycan synthesis enzyme MurE has an essential role in chloroplast development.</title>
        <authorList>
            <person name="Garcia M."/>
            <person name="Myouga F."/>
            <person name="Takechi K."/>
            <person name="Sato H."/>
            <person name="Nabeshima K."/>
            <person name="Nagata N."/>
            <person name="Takio S."/>
            <person name="Shinozaki K."/>
            <person name="Takano H."/>
        </authorList>
    </citation>
    <scope>FUNCTION</scope>
    <scope>SUBCELLULAR LOCATION</scope>
    <scope>TISSUE SPECIFICITY</scope>
    <scope>DISRUPTION PHENOTYPE</scope>
</reference>
<reference key="5">
    <citation type="journal article" date="2009" name="Plant Physiol.">
        <title>Large-scale Arabidopsis phosphoproteome profiling reveals novel chloroplast kinase substrates and phosphorylation networks.</title>
        <authorList>
            <person name="Reiland S."/>
            <person name="Messerli G."/>
            <person name="Baerenfaller K."/>
            <person name="Gerrits B."/>
            <person name="Endler A."/>
            <person name="Grossmann J."/>
            <person name="Gruissem W."/>
            <person name="Baginsky S."/>
        </authorList>
    </citation>
    <scope>PHOSPHORYLATION [LARGE SCALE ANALYSIS] AT SER-194</scope>
    <scope>IDENTIFICATION BY MASS SPECTROMETRY [LARGE SCALE ANALYSIS]</scope>
</reference>
<proteinExistence type="evidence at protein level"/>
<dbReference type="EMBL" id="AC011622">
    <property type="protein sequence ID" value="AAG52413.1"/>
    <property type="status" value="ALT_SEQ"/>
    <property type="molecule type" value="Genomic_DNA"/>
</dbReference>
<dbReference type="EMBL" id="CP002684">
    <property type="protein sequence ID" value="AEE34132.1"/>
    <property type="molecule type" value="Genomic_DNA"/>
</dbReference>
<dbReference type="EMBL" id="CP002684">
    <property type="protein sequence ID" value="ANM59538.1"/>
    <property type="molecule type" value="Genomic_DNA"/>
</dbReference>
<dbReference type="EMBL" id="CP002684">
    <property type="protein sequence ID" value="ANM59539.1"/>
    <property type="molecule type" value="Genomic_DNA"/>
</dbReference>
<dbReference type="PIR" id="G96661">
    <property type="entry name" value="G96661"/>
</dbReference>
<dbReference type="RefSeq" id="NP_001321888.1">
    <property type="nucleotide sequence ID" value="NM_001334121.1"/>
</dbReference>
<dbReference type="RefSeq" id="NP_001321889.1">
    <property type="nucleotide sequence ID" value="NM_001334120.1"/>
</dbReference>
<dbReference type="RefSeq" id="NP_176555.4">
    <property type="nucleotide sequence ID" value="NM_105045.6"/>
</dbReference>
<dbReference type="SMR" id="F4I3P9"/>
<dbReference type="FunCoup" id="F4I3P9">
    <property type="interactions" value="609"/>
</dbReference>
<dbReference type="STRING" id="3702.F4I3P9"/>
<dbReference type="iPTMnet" id="F4I3P9"/>
<dbReference type="PaxDb" id="3702-AT1G63680.1"/>
<dbReference type="ProteomicsDB" id="251409"/>
<dbReference type="EnsemblPlants" id="AT1G63680.1">
    <property type="protein sequence ID" value="AT1G63680.1"/>
    <property type="gene ID" value="AT1G63680"/>
</dbReference>
<dbReference type="EnsemblPlants" id="AT1G63680.2">
    <property type="protein sequence ID" value="AT1G63680.2"/>
    <property type="gene ID" value="AT1G63680"/>
</dbReference>
<dbReference type="EnsemblPlants" id="AT1G63680.3">
    <property type="protein sequence ID" value="AT1G63680.3"/>
    <property type="gene ID" value="AT1G63680"/>
</dbReference>
<dbReference type="GeneID" id="842672"/>
<dbReference type="Gramene" id="AT1G63680.1">
    <property type="protein sequence ID" value="AT1G63680.1"/>
    <property type="gene ID" value="AT1G63680"/>
</dbReference>
<dbReference type="Gramene" id="AT1G63680.2">
    <property type="protein sequence ID" value="AT1G63680.2"/>
    <property type="gene ID" value="AT1G63680"/>
</dbReference>
<dbReference type="Gramene" id="AT1G63680.3">
    <property type="protein sequence ID" value="AT1G63680.3"/>
    <property type="gene ID" value="AT1G63680"/>
</dbReference>
<dbReference type="KEGG" id="ath:AT1G63680"/>
<dbReference type="Araport" id="AT1G63680"/>
<dbReference type="TAIR" id="AT1G63680">
    <property type="gene designation" value="MURE"/>
</dbReference>
<dbReference type="eggNOG" id="ENOG502QTHZ">
    <property type="taxonomic scope" value="Eukaryota"/>
</dbReference>
<dbReference type="HOGENOM" id="CLU_022291_4_0_1"/>
<dbReference type="InParanoid" id="F4I3P9"/>
<dbReference type="OMA" id="FLHYDTR"/>
<dbReference type="PRO" id="PR:F4I3P9"/>
<dbReference type="Proteomes" id="UP000006548">
    <property type="component" value="Chromosome 1"/>
</dbReference>
<dbReference type="ExpressionAtlas" id="F4I3P9">
    <property type="expression patterns" value="baseline and differential"/>
</dbReference>
<dbReference type="GO" id="GO:0009507">
    <property type="term" value="C:chloroplast"/>
    <property type="evidence" value="ECO:0000314"/>
    <property type="project" value="TAIR"/>
</dbReference>
<dbReference type="GO" id="GO:0042644">
    <property type="term" value="C:chloroplast nucleoid"/>
    <property type="evidence" value="ECO:0007005"/>
    <property type="project" value="TAIR"/>
</dbReference>
<dbReference type="GO" id="GO:0016881">
    <property type="term" value="F:acid-amino acid ligase activity"/>
    <property type="evidence" value="ECO:0007669"/>
    <property type="project" value="InterPro"/>
</dbReference>
<dbReference type="GO" id="GO:0005524">
    <property type="term" value="F:ATP binding"/>
    <property type="evidence" value="ECO:0007669"/>
    <property type="project" value="InterPro"/>
</dbReference>
<dbReference type="GO" id="GO:0009058">
    <property type="term" value="P:biosynthetic process"/>
    <property type="evidence" value="ECO:0007669"/>
    <property type="project" value="InterPro"/>
</dbReference>
<dbReference type="GO" id="GO:0051301">
    <property type="term" value="P:cell division"/>
    <property type="evidence" value="ECO:0007669"/>
    <property type="project" value="InterPro"/>
</dbReference>
<dbReference type="GO" id="GO:0010020">
    <property type="term" value="P:chloroplast fission"/>
    <property type="evidence" value="ECO:0000315"/>
    <property type="project" value="TAIR"/>
</dbReference>
<dbReference type="GO" id="GO:0009658">
    <property type="term" value="P:chloroplast organization"/>
    <property type="evidence" value="ECO:0000315"/>
    <property type="project" value="TAIR"/>
</dbReference>
<dbReference type="GO" id="GO:0008360">
    <property type="term" value="P:regulation of cell shape"/>
    <property type="evidence" value="ECO:0007669"/>
    <property type="project" value="InterPro"/>
</dbReference>
<dbReference type="FunFam" id="3.40.1190.10:FF:000014">
    <property type="entry name" value="UDP-N-acetylmuramoyl-L-alanyl-D-glutamate--2, 6-diaminopimelate ligase"/>
    <property type="match status" value="1"/>
</dbReference>
<dbReference type="FunFam" id="3.90.190.20:FF:000006">
    <property type="entry name" value="UDP-N-acetylmuramoyl-L-alanyl-D-glutamate--2,6-diaminopimelate ligase"/>
    <property type="match status" value="1"/>
</dbReference>
<dbReference type="Gene3D" id="3.90.190.20">
    <property type="entry name" value="Mur ligase, C-terminal domain"/>
    <property type="match status" value="1"/>
</dbReference>
<dbReference type="Gene3D" id="3.40.1190.10">
    <property type="entry name" value="Mur-like, catalytic domain"/>
    <property type="match status" value="1"/>
</dbReference>
<dbReference type="Gene3D" id="3.40.1390.10">
    <property type="entry name" value="MurE/MurF, N-terminal domain"/>
    <property type="match status" value="1"/>
</dbReference>
<dbReference type="HAMAP" id="MF_00208">
    <property type="entry name" value="MurE"/>
    <property type="match status" value="1"/>
</dbReference>
<dbReference type="InterPro" id="IPR036565">
    <property type="entry name" value="Mur-like_cat_sf"/>
</dbReference>
<dbReference type="InterPro" id="IPR004101">
    <property type="entry name" value="Mur_ligase_C"/>
</dbReference>
<dbReference type="InterPro" id="IPR036615">
    <property type="entry name" value="Mur_ligase_C_dom_sf"/>
</dbReference>
<dbReference type="InterPro" id="IPR013221">
    <property type="entry name" value="Mur_ligase_cen"/>
</dbReference>
<dbReference type="InterPro" id="IPR000713">
    <property type="entry name" value="Mur_ligase_N"/>
</dbReference>
<dbReference type="InterPro" id="IPR035911">
    <property type="entry name" value="MurE/MurF_N"/>
</dbReference>
<dbReference type="InterPro" id="IPR005761">
    <property type="entry name" value="UDP-N-AcMur-Glu-dNH2Pim_ligase"/>
</dbReference>
<dbReference type="NCBIfam" id="TIGR01085">
    <property type="entry name" value="murE"/>
    <property type="match status" value="1"/>
</dbReference>
<dbReference type="NCBIfam" id="NF001126">
    <property type="entry name" value="PRK00139.1-4"/>
    <property type="match status" value="1"/>
</dbReference>
<dbReference type="PANTHER" id="PTHR23135">
    <property type="entry name" value="MUR LIGASE FAMILY MEMBER"/>
    <property type="match status" value="1"/>
</dbReference>
<dbReference type="PANTHER" id="PTHR23135:SF4">
    <property type="entry name" value="UDP-N-ACETYLMURAMOYL-L-ALANYL-D-GLUTAMATE--2,6-DIAMINOPIMELATE LIGASE MURE HOMOLOG, CHLOROPLASTIC"/>
    <property type="match status" value="1"/>
</dbReference>
<dbReference type="Pfam" id="PF01225">
    <property type="entry name" value="Mur_ligase"/>
    <property type="match status" value="1"/>
</dbReference>
<dbReference type="Pfam" id="PF02875">
    <property type="entry name" value="Mur_ligase_C"/>
    <property type="match status" value="1"/>
</dbReference>
<dbReference type="Pfam" id="PF08245">
    <property type="entry name" value="Mur_ligase_M"/>
    <property type="match status" value="1"/>
</dbReference>
<dbReference type="SUPFAM" id="SSF53623">
    <property type="entry name" value="MurD-like peptide ligases, catalytic domain"/>
    <property type="match status" value="1"/>
</dbReference>
<dbReference type="SUPFAM" id="SSF53244">
    <property type="entry name" value="MurD-like peptide ligases, peptide-binding domain"/>
    <property type="match status" value="1"/>
</dbReference>
<dbReference type="SUPFAM" id="SSF63418">
    <property type="entry name" value="MurE/MurF N-terminal domain"/>
    <property type="match status" value="1"/>
</dbReference>
<name>MURE_ARATH</name>
<accession>F4I3P9</accession>
<accession>Q9CAD3</accession>
<feature type="transit peptide" description="Chloroplast" evidence="1">
    <location>
        <begin position="1"/>
        <end position="40"/>
    </location>
</feature>
<feature type="chain" id="PRO_0000441845" description="UDP-N-acetylmuramoyl-L-alanyl-D-glutamate--2,6-diaminopimelate ligase MurE homolog, chloroplastic">
    <location>
        <begin position="41"/>
        <end position="772"/>
    </location>
</feature>
<feature type="region of interest" description="Disordered" evidence="2">
    <location>
        <begin position="42"/>
        <end position="87"/>
    </location>
</feature>
<feature type="region of interest" description="Disordered" evidence="2">
    <location>
        <begin position="141"/>
        <end position="168"/>
    </location>
</feature>
<feature type="compositionally biased region" description="Acidic residues" evidence="2">
    <location>
        <begin position="54"/>
        <end position="63"/>
    </location>
</feature>
<feature type="compositionally biased region" description="Acidic residues" evidence="2">
    <location>
        <begin position="158"/>
        <end position="168"/>
    </location>
</feature>
<feature type="modified residue" description="Phosphoserine" evidence="9">
    <location>
        <position position="194"/>
    </location>
</feature>
<sequence length="772" mass="85587">MAFTFLSPHPVFLSLTGTTSSFSYKPVLLPFSRNSRTLTVAAGPARRNSYPNPADDDPPEAPEDSMHGVSKFQQIQRQAARARKLEEEDFEKNRNTYLSAIADVEDAAETGRDDEESGGDLFSDIDRAISMKRSEFVKQGLLKPNPPKTASLKKIGEEGNEEEGDVTDDVDELDEEEVVDLDEIDKLTGLTEISDEEDWVDEEGNTRINKKKEFGSDHQFEFDLDDFGESKARIVEPKFKMCLAELLDESKVVPISVYGDLDVEITGIQHDSRGVSAGDLFVCCLGSENFLSEADKRGAVAVVASKEIDIEDTLGCRALVIVEDTNAVLAALASSFYRHPSKNMSVIGVTGTDGKTTTTYLIKSLYEAMGVRTGMFSTVSCYIHGDNKLDTPNATMNPDAVLVQSLMAKMLHNGTESLVMEASPQELALGKCDEVDFDIAVFTNLTRENTDFRGTDEEYRDAEAKLFSRMVDPERHRKVVNIDDPNAAFFVQQGNPNVPVVTFAMENTKADVHPLKFELSLFETQVLVNTPQGILEISSGLLGRHNIYNILAAVAVGIAVGAPLEDIVRGVEEVDAVPGRCELIDEEQAFGVIVDHANTPDGLSRLLDSIRELKPRRIITVIGCEGENERGKRPLMTKIATEKSDVTMLTSDNPRNEDPLDILDDMLSGIGWTMQEYLKHGEHDYYPPLANGHRLFLHDIRRVAVRCAVAMGEEGDMVVVAGKGHEAYQLEGEKKEFYDDREECREALQYVDELHQAGIDTSEFPWRLPESH</sequence>